<keyword id="KW-0964">Secreted</keyword>
<keyword id="KW-0843">Virulence</keyword>
<proteinExistence type="inferred from homology"/>
<comment type="function">
    <text evidence="3">Implements its pathogenic function during infection.</text>
</comment>
<comment type="subunit">
    <text evidence="1">Forms both homodimers and heterodimers with EsxA. Homodimerization is calcium-dependent.</text>
</comment>
<comment type="subcellular location">
    <subcellularLocation>
        <location evidence="2">Secreted</location>
    </subcellularLocation>
    <text evidence="2">Secreted via the ESAT-6 secretion system (Ess) / type VII secretion system (T7SS).</text>
</comment>
<comment type="similarity">
    <text evidence="5">Belongs to the EsxC family.</text>
</comment>
<feature type="chain" id="PRO_0000087051" description="Type VII secretion system extracellular protein C">
    <location>
        <begin position="1"/>
        <end position="130"/>
    </location>
</feature>
<dbReference type="EMBL" id="BA000017">
    <property type="protein sequence ID" value="BAB56451.1"/>
    <property type="molecule type" value="Genomic_DNA"/>
</dbReference>
<dbReference type="RefSeq" id="WP_001010292.1">
    <property type="nucleotide sequence ID" value="NC_002758.2"/>
</dbReference>
<dbReference type="SMR" id="Q99WT8"/>
<dbReference type="TCDB" id="3.A.7.17.1">
    <property type="family name" value="the type iv (conjugal dna-protein transfer or virb) secretory pathway (ivsp) family"/>
</dbReference>
<dbReference type="KEGG" id="sav:SAV0289"/>
<dbReference type="HOGENOM" id="CLU_1936813_0_0_9"/>
<dbReference type="Proteomes" id="UP000002481">
    <property type="component" value="Chromosome"/>
</dbReference>
<dbReference type="GO" id="GO:0005576">
    <property type="term" value="C:extracellular region"/>
    <property type="evidence" value="ECO:0007669"/>
    <property type="project" value="UniProtKB-SubCell"/>
</dbReference>
<evidence type="ECO:0000250" key="1">
    <source>
        <dbReference type="UniProtKB" id="A0A0H2XIK2"/>
    </source>
</evidence>
<evidence type="ECO:0000250" key="2">
    <source>
        <dbReference type="UniProtKB" id="P0C051"/>
    </source>
</evidence>
<evidence type="ECO:0000269" key="3">
    <source>
    </source>
</evidence>
<evidence type="ECO:0000303" key="4">
    <source>
    </source>
</evidence>
<evidence type="ECO:0000305" key="5"/>
<gene>
    <name evidence="1" type="primary">esxC</name>
    <name evidence="4" type="synonym">esaC</name>
    <name type="ordered locus">SAV0289</name>
</gene>
<protein>
    <recommendedName>
        <fullName evidence="2">Type VII secretion system extracellular protein C</fullName>
        <shortName evidence="2">Ess extracellular protein C</shortName>
    </recommendedName>
</protein>
<sequence>MNFNDIETMVKSKFKDIKKHAEEIAHEIEVRSGYLRKAEQYKRLEFNLSIALDDVESTAKDVQTAKSSANKDSVSVKGKAPNTLYIEKRNLMKQKLEMLGEDIDKNKESLQKAKGIAGEKASEYFNKAMN</sequence>
<name>ESXC_STAAM</name>
<accession>Q99WT8</accession>
<organism>
    <name type="scientific">Staphylococcus aureus (strain Mu50 / ATCC 700699)</name>
    <dbReference type="NCBI Taxonomy" id="158878"/>
    <lineage>
        <taxon>Bacteria</taxon>
        <taxon>Bacillati</taxon>
        <taxon>Bacillota</taxon>
        <taxon>Bacilli</taxon>
        <taxon>Bacillales</taxon>
        <taxon>Staphylococcaceae</taxon>
        <taxon>Staphylococcus</taxon>
    </lineage>
</organism>
<reference key="1">
    <citation type="journal article" date="2001" name="Lancet">
        <title>Whole genome sequencing of meticillin-resistant Staphylococcus aureus.</title>
        <authorList>
            <person name="Kuroda M."/>
            <person name="Ohta T."/>
            <person name="Uchiyama I."/>
            <person name="Baba T."/>
            <person name="Yuzawa H."/>
            <person name="Kobayashi I."/>
            <person name="Cui L."/>
            <person name="Oguchi A."/>
            <person name="Aoki K."/>
            <person name="Nagai Y."/>
            <person name="Lian J.-Q."/>
            <person name="Ito T."/>
            <person name="Kanamori M."/>
            <person name="Matsumaru H."/>
            <person name="Maruyama A."/>
            <person name="Murakami H."/>
            <person name="Hosoyama A."/>
            <person name="Mizutani-Ui Y."/>
            <person name="Takahashi N.K."/>
            <person name="Sawano T."/>
            <person name="Inoue R."/>
            <person name="Kaito C."/>
            <person name="Sekimizu K."/>
            <person name="Hirakawa H."/>
            <person name="Kuhara S."/>
            <person name="Goto S."/>
            <person name="Yabuzaki J."/>
            <person name="Kanehisa M."/>
            <person name="Yamashita A."/>
            <person name="Oshima K."/>
            <person name="Furuya K."/>
            <person name="Yoshino C."/>
            <person name="Shiba T."/>
            <person name="Hattori M."/>
            <person name="Ogasawara N."/>
            <person name="Hayashi H."/>
            <person name="Hiramatsu K."/>
        </authorList>
    </citation>
    <scope>NUCLEOTIDE SEQUENCE [LARGE SCALE GENOMIC DNA]</scope>
    <source>
        <strain>Mu50 / ATCC 700699</strain>
    </source>
</reference>
<reference key="2">
    <citation type="journal article" date="2008" name="Mol. Microbiol.">
        <title>EsaC substrate for the ESAT-6 secretion pathway and its role in persistent infections of Staphylococcus aureus.</title>
        <authorList>
            <person name="Burts M.L."/>
            <person name="DeDent A.C."/>
            <person name="Missiakas D.M."/>
        </authorList>
    </citation>
    <scope>FUNCTION</scope>
</reference>